<comment type="function">
    <text evidence="1">Plays a role in virus cell tropism, and may be required for efficient virus replication in macrophages.</text>
</comment>
<comment type="similarity">
    <text evidence="2">Belongs to the asfivirus MGF 360 family.</text>
</comment>
<sequence length="362" mass="42407">MPSTLQVLAKKVLALEHKENDHISREYYYHILKCCGLWWHEAPIILCFNGSKQMMIKTPIFEEGILLNTALMKAVQDNNYELIKLFTEWGANINYGLVSINTEHTRDLCRKLGAKEMLERNEVIQIIFKTLDDTTSSNMILCHELFTNNPLLENVNMGEMRMIIHWKMKNLTDLLLDNNSISEILTKFWYGIAVKYNLKDAIQYFYQRFINFNEWRVTCALSFNNVNDLHKMYITEKVHMNNDEMMNLACSIQDKNFSTIYYCFLLGANINQAMFTSVSNYNVFNIFFCIDLGADAFEEGKALAKQKGYNEIVEILSLDIIYSPNTDFLSKIKPEHISFLLKNFYPKNLYIFDRCKPGLYYP</sequence>
<organism>
    <name type="scientific">African swine fever virus (isolate Warthog/Namibia/Wart80/1980)</name>
    <name type="common">ASFV</name>
    <dbReference type="NCBI Taxonomy" id="561444"/>
    <lineage>
        <taxon>Viruses</taxon>
        <taxon>Varidnaviria</taxon>
        <taxon>Bamfordvirae</taxon>
        <taxon>Nucleocytoviricota</taxon>
        <taxon>Pokkesviricetes</taxon>
        <taxon>Asfuvirales</taxon>
        <taxon>Asfarviridae</taxon>
        <taxon>Asfivirus</taxon>
        <taxon>African swine fever virus</taxon>
    </lineage>
</organism>
<accession>P0C9R5</accession>
<reference key="1">
    <citation type="submission" date="2003-03" db="EMBL/GenBank/DDBJ databases">
        <title>African swine fever virus genomes.</title>
        <authorList>
            <person name="Kutish G.F."/>
            <person name="Rock D.L."/>
        </authorList>
    </citation>
    <scope>NUCLEOTIDE SEQUENCE [LARGE SCALE GENOMIC DNA]</scope>
</reference>
<proteinExistence type="inferred from homology"/>
<protein>
    <recommendedName>
        <fullName>Protein MGF 360-18R</fullName>
    </recommendedName>
</protein>
<dbReference type="EMBL" id="AY261366">
    <property type="status" value="NOT_ANNOTATED_CDS"/>
    <property type="molecule type" value="Genomic_DNA"/>
</dbReference>
<dbReference type="SMR" id="P0C9R5"/>
<dbReference type="Proteomes" id="UP000000858">
    <property type="component" value="Segment"/>
</dbReference>
<dbReference type="GO" id="GO:0042330">
    <property type="term" value="P:taxis"/>
    <property type="evidence" value="ECO:0007669"/>
    <property type="project" value="InterPro"/>
</dbReference>
<dbReference type="InterPro" id="IPR002595">
    <property type="entry name" value="ASFV_MGF360"/>
</dbReference>
<dbReference type="Pfam" id="PF01671">
    <property type="entry name" value="ASFV_360"/>
    <property type="match status" value="1"/>
</dbReference>
<feature type="chain" id="PRO_0000373302" description="Protein MGF 360-18R">
    <location>
        <begin position="1"/>
        <end position="362"/>
    </location>
</feature>
<gene>
    <name type="ordered locus">War-169</name>
</gene>
<evidence type="ECO:0000250" key="1"/>
<evidence type="ECO:0000305" key="2"/>
<organismHost>
    <name type="scientific">Ornithodoros</name>
    <name type="common">relapsing fever ticks</name>
    <dbReference type="NCBI Taxonomy" id="6937"/>
</organismHost>
<organismHost>
    <name type="scientific">Phacochoerus aethiopicus</name>
    <name type="common">Warthog</name>
    <dbReference type="NCBI Taxonomy" id="85517"/>
</organismHost>
<organismHost>
    <name type="scientific">Phacochoerus africanus</name>
    <name type="common">Warthog</name>
    <dbReference type="NCBI Taxonomy" id="41426"/>
</organismHost>
<organismHost>
    <name type="scientific">Potamochoerus larvatus</name>
    <name type="common">Bushpig</name>
    <dbReference type="NCBI Taxonomy" id="273792"/>
</organismHost>
<organismHost>
    <name type="scientific">Sus scrofa</name>
    <name type="common">Pig</name>
    <dbReference type="NCBI Taxonomy" id="9823"/>
</organismHost>
<name>36018_ASFWA</name>